<keyword id="KW-0998">Cell outer membrane</keyword>
<keyword id="KW-0204">Cytolysis</keyword>
<keyword id="KW-0354">Hemolysis</keyword>
<keyword id="KW-0378">Hydrolase</keyword>
<keyword id="KW-0406">Ion transport</keyword>
<keyword id="KW-0442">Lipid degradation</keyword>
<keyword id="KW-0443">Lipid metabolism</keyword>
<keyword id="KW-0472">Membrane</keyword>
<keyword id="KW-0626">Porin</keyword>
<keyword id="KW-1185">Reference proteome</keyword>
<keyword id="KW-0732">Signal</keyword>
<keyword id="KW-0812">Transmembrane</keyword>
<keyword id="KW-1134">Transmembrane beta strand</keyword>
<keyword id="KW-1133">Transmembrane helix</keyword>
<keyword id="KW-0813">Transport</keyword>
<name>SMASE_MYCBO</name>
<protein>
    <recommendedName>
        <fullName evidence="1">Sphingomyelinase</fullName>
        <shortName evidence="1">SMase</shortName>
        <ecNumber evidence="1">3.1.4.12</ecNumber>
    </recommendedName>
</protein>
<gene>
    <name type="ordered locus">BQ2027_MB0912</name>
</gene>
<reference key="1">
    <citation type="journal article" date="2003" name="Proc. Natl. Acad. Sci. U.S.A.">
        <title>The complete genome sequence of Mycobacterium bovis.</title>
        <authorList>
            <person name="Garnier T."/>
            <person name="Eiglmeier K."/>
            <person name="Camus J.-C."/>
            <person name="Medina N."/>
            <person name="Mansoor H."/>
            <person name="Pryor M."/>
            <person name="Duthoy S."/>
            <person name="Grondin S."/>
            <person name="Lacroix C."/>
            <person name="Monsempe C."/>
            <person name="Simon S."/>
            <person name="Harris B."/>
            <person name="Atkin R."/>
            <person name="Doggett J."/>
            <person name="Mayes R."/>
            <person name="Keating L."/>
            <person name="Wheeler P.R."/>
            <person name="Parkhill J."/>
            <person name="Barrell B.G."/>
            <person name="Cole S.T."/>
            <person name="Gordon S.V."/>
            <person name="Hewinson R.G."/>
        </authorList>
    </citation>
    <scope>NUCLEOTIDE SEQUENCE [LARGE SCALE GENOMIC DNA]</scope>
    <source>
        <strain>ATCC BAA-935 / AF2122/97</strain>
    </source>
</reference>
<reference key="2">
    <citation type="journal article" date="2017" name="Genome Announc.">
        <title>Updated reference genome sequence and annotation of Mycobacterium bovis AF2122/97.</title>
        <authorList>
            <person name="Malone K.M."/>
            <person name="Farrell D."/>
            <person name="Stuber T.P."/>
            <person name="Schubert O.T."/>
            <person name="Aebersold R."/>
            <person name="Robbe-Austerman S."/>
            <person name="Gordon S.V."/>
        </authorList>
    </citation>
    <scope>NUCLEOTIDE SEQUENCE [LARGE SCALE GENOMIC DNA]</scope>
    <scope>GENOME REANNOTATION</scope>
    <source>
        <strain>ATCC BAA-935 / AF2122/97</strain>
    </source>
</reference>
<evidence type="ECO:0000250" key="1">
    <source>
        <dbReference type="UniProtKB" id="P9WKQ1"/>
    </source>
</evidence>
<evidence type="ECO:0000255" key="2"/>
<evidence type="ECO:0000256" key="3">
    <source>
        <dbReference type="SAM" id="MobiDB-lite"/>
    </source>
</evidence>
<evidence type="ECO:0000305" key="4"/>
<accession>P64744</accession>
<accession>A0A1R3XWR6</accession>
<accession>Q10549</accession>
<accession>X2BGF4</accession>
<dbReference type="EC" id="3.1.4.12" evidence="1"/>
<dbReference type="EMBL" id="LT708304">
    <property type="protein sequence ID" value="SIT99510.1"/>
    <property type="molecule type" value="Genomic_DNA"/>
</dbReference>
<dbReference type="RefSeq" id="NP_854569.1">
    <property type="nucleotide sequence ID" value="NC_002945.3"/>
</dbReference>
<dbReference type="SMR" id="P64744"/>
<dbReference type="KEGG" id="mbo:BQ2027_MB0912"/>
<dbReference type="PATRIC" id="fig|233413.5.peg.993"/>
<dbReference type="Proteomes" id="UP000001419">
    <property type="component" value="Chromosome"/>
</dbReference>
<dbReference type="GO" id="GO:0009279">
    <property type="term" value="C:cell outer membrane"/>
    <property type="evidence" value="ECO:0007669"/>
    <property type="project" value="UniProtKB-SubCell"/>
</dbReference>
<dbReference type="GO" id="GO:0046930">
    <property type="term" value="C:pore complex"/>
    <property type="evidence" value="ECO:0007669"/>
    <property type="project" value="UniProtKB-KW"/>
</dbReference>
<dbReference type="GO" id="GO:0015288">
    <property type="term" value="F:porin activity"/>
    <property type="evidence" value="ECO:0007669"/>
    <property type="project" value="UniProtKB-KW"/>
</dbReference>
<dbReference type="GO" id="GO:0004767">
    <property type="term" value="F:sphingomyelin phosphodiesterase activity"/>
    <property type="evidence" value="ECO:0007669"/>
    <property type="project" value="UniProtKB-EC"/>
</dbReference>
<dbReference type="GO" id="GO:0031640">
    <property type="term" value="P:killing of cells of another organism"/>
    <property type="evidence" value="ECO:0007669"/>
    <property type="project" value="UniProtKB-KW"/>
</dbReference>
<dbReference type="GO" id="GO:0016042">
    <property type="term" value="P:lipid catabolic process"/>
    <property type="evidence" value="ECO:0007669"/>
    <property type="project" value="UniProtKB-KW"/>
</dbReference>
<dbReference type="GO" id="GO:0006811">
    <property type="term" value="P:monoatomic ion transport"/>
    <property type="evidence" value="ECO:0007669"/>
    <property type="project" value="UniProtKB-KW"/>
</dbReference>
<dbReference type="Gene3D" id="2.60.40.3440">
    <property type="match status" value="1"/>
</dbReference>
<dbReference type="Gene3D" id="3.60.10.10">
    <property type="entry name" value="Endonuclease/exonuclease/phosphatase"/>
    <property type="match status" value="1"/>
</dbReference>
<dbReference type="InterPro" id="IPR036691">
    <property type="entry name" value="Endo/exonu/phosph_ase_sf"/>
</dbReference>
<dbReference type="InterPro" id="IPR005135">
    <property type="entry name" value="Endo/exonuclease/phosphatase"/>
</dbReference>
<dbReference type="Pfam" id="PF17963">
    <property type="entry name" value="Big_9"/>
    <property type="match status" value="1"/>
</dbReference>
<dbReference type="Pfam" id="PF03372">
    <property type="entry name" value="Exo_endo_phos"/>
    <property type="match status" value="1"/>
</dbReference>
<dbReference type="SUPFAM" id="SSF56219">
    <property type="entry name" value="DNase I-like"/>
    <property type="match status" value="1"/>
</dbReference>
<organism>
    <name type="scientific">Mycobacterium bovis (strain ATCC BAA-935 / AF2122/97)</name>
    <dbReference type="NCBI Taxonomy" id="233413"/>
    <lineage>
        <taxon>Bacteria</taxon>
        <taxon>Bacillati</taxon>
        <taxon>Actinomycetota</taxon>
        <taxon>Actinomycetes</taxon>
        <taxon>Mycobacteriales</taxon>
        <taxon>Mycobacteriaceae</taxon>
        <taxon>Mycobacterium</taxon>
        <taxon>Mycobacterium tuberculosis complex</taxon>
    </lineage>
</organism>
<sequence length="490" mass="52034">MDYAKRIGQVGALAVVLGVGAAVTTHAIGSAAPTDPSSSSTDSPVDACSPLGGSASSLAAIPGASVPQVGVRQVDPGSIPDDLLNALIDFLAAVRNGLVPIIENRTPVANPQQVSVPEGGTVGPVRFDACDPDGNRMTFAVRERGAPGGPQHGIVTVDQRTASFIYTADPGFVGTDTFSVNVSDDTSLHVHGLAGYLGPFHGHDDVATVTVFVGNTPTDTISGDFSMLTYNIAGLPFPLSSAILPRFFYTKEIGKRLNAYYVANVQEDFAYHQFLIKKSKMPSQTPPEPPTLLWPIGVPFSDGLNTLSEFKVQRLDRQTWYECTSDNCLTLKGFTYSQMRLPGGDTVDVYNLHTNTGGGPTTNANLAQVANYIQQNSAGRAVIVTGDFNARYSDDQSALLQFAQVNGLTDAWVQVEHGPTTPPFAPTCMVGNECELLDKIFYRSGQGVTLQAVSYGNEAPKFFNSKGEPLSDHSPAVVGFHYVADNVAVR</sequence>
<proteinExistence type="inferred from homology"/>
<comment type="function">
    <text evidence="1">Catalyzes the cleavage of sphingomyelin, a major lipid in eukaryotic cells, into ceramide and phosphocholine, which are then utilized by M.bovis as carbon, nitrogen and phosphorus sources, respectively. Thus, enables M.bovis to utilize sphingomyelin as a source of several essential nutrients for intracellular growth during infection. Furthermore, lyses erythrocytes and constitutes a hemolytic factor.</text>
</comment>
<comment type="catalytic activity">
    <reaction evidence="1">
        <text>a sphingomyelin + H2O = phosphocholine + an N-acylsphing-4-enine + H(+)</text>
        <dbReference type="Rhea" id="RHEA:19253"/>
        <dbReference type="ChEBI" id="CHEBI:15377"/>
        <dbReference type="ChEBI" id="CHEBI:15378"/>
        <dbReference type="ChEBI" id="CHEBI:17636"/>
        <dbReference type="ChEBI" id="CHEBI:52639"/>
        <dbReference type="ChEBI" id="CHEBI:295975"/>
        <dbReference type="EC" id="3.1.4.12"/>
    </reaction>
</comment>
<comment type="subcellular location">
    <subcellularLocation>
        <location evidence="1">Cell outer membrane</location>
        <topology evidence="1">Multi-pass membrane protein</topology>
    </subcellularLocation>
</comment>
<comment type="domain">
    <text evidence="1">Consists of a surface-exposed C-terminal sphingomyelinase domain and a putative outer membrane-spanning N-terminal channel domain able to mediate glucose and phosphocholine uptake across the outer membrane.</text>
</comment>
<comment type="similarity">
    <text evidence="4">Belongs to the SpmT family.</text>
</comment>
<feature type="signal peptide" evidence="2">
    <location>
        <begin position="1"/>
        <end position="31"/>
    </location>
</feature>
<feature type="chain" id="PRO_0000103732" description="Sphingomyelinase">
    <location>
        <begin position="32"/>
        <end position="490"/>
    </location>
</feature>
<feature type="topological domain" description="Periplasmic" evidence="1">
    <location>
        <begin position="32"/>
        <end position="136"/>
    </location>
</feature>
<feature type="transmembrane region" description="Beta stranded" evidence="1">
    <location>
        <begin position="137"/>
        <end position="145"/>
    </location>
</feature>
<feature type="topological domain" description="Extracellular" evidence="1">
    <location>
        <begin position="146"/>
        <end position="161"/>
    </location>
</feature>
<feature type="transmembrane region" description="Beta stranded" evidence="1">
    <location>
        <begin position="162"/>
        <end position="168"/>
    </location>
</feature>
<feature type="topological domain" description="Periplasmic" evidence="1">
    <location>
        <begin position="169"/>
        <end position="171"/>
    </location>
</feature>
<feature type="transmembrane region" description="Beta stranded" evidence="1">
    <location>
        <begin position="172"/>
        <end position="182"/>
    </location>
</feature>
<feature type="topological domain" description="Extracellular" evidence="1">
    <location>
        <begin position="183"/>
        <end position="187"/>
    </location>
</feature>
<feature type="transmembrane region" description="Beta stranded" evidence="1">
    <location>
        <begin position="188"/>
        <end position="196"/>
    </location>
</feature>
<feature type="topological domain" description="Periplasmic" evidence="1">
    <location>
        <begin position="197"/>
        <end position="204"/>
    </location>
</feature>
<feature type="transmembrane region" description="Beta stranded" evidence="1">
    <location>
        <begin position="205"/>
        <end position="213"/>
    </location>
</feature>
<feature type="topological domain" description="Extracellular" evidence="1">
    <location>
        <begin position="214"/>
        <end position="490"/>
    </location>
</feature>
<feature type="region of interest" description="Disordered" evidence="3">
    <location>
        <begin position="30"/>
        <end position="49"/>
    </location>
</feature>